<reference key="1">
    <citation type="journal article" date="2005" name="PLoS Genet.">
        <title>Life in hot carbon monoxide: the complete genome sequence of Carboxydothermus hydrogenoformans Z-2901.</title>
        <authorList>
            <person name="Wu M."/>
            <person name="Ren Q."/>
            <person name="Durkin A.S."/>
            <person name="Daugherty S.C."/>
            <person name="Brinkac L.M."/>
            <person name="Dodson R.J."/>
            <person name="Madupu R."/>
            <person name="Sullivan S.A."/>
            <person name="Kolonay J.F."/>
            <person name="Nelson W.C."/>
            <person name="Tallon L.J."/>
            <person name="Jones K.M."/>
            <person name="Ulrich L.E."/>
            <person name="Gonzalez J.M."/>
            <person name="Zhulin I.B."/>
            <person name="Robb F.T."/>
            <person name="Eisen J.A."/>
        </authorList>
    </citation>
    <scope>NUCLEOTIDE SEQUENCE [LARGE SCALE GENOMIC DNA]</scope>
    <source>
        <strain>ATCC BAA-161 / DSM 6008 / Z-2901</strain>
    </source>
</reference>
<reference key="2">
    <citation type="journal article" date="2002" name="J. Biol. Chem.">
        <title>A lysine substitute for K+. A460K mutation eliminates K+ dependence in H+-pyrophosphatase of Carboxydothermus hydrogenoformans.</title>
        <authorList>
            <person name="Belogurov G.A."/>
            <person name="Lahti R."/>
        </authorList>
    </citation>
    <scope>CATALYTIC ACTIVITY</scope>
    <scope>ACTIVITY REGULATION</scope>
    <scope>MUTAGENESIS OF ALA-460 AND ALA-463</scope>
    <scope>IDENTIFICATION OF SITE IMPORTANT FOR POTASSIUM DEPENDENCE</scope>
</reference>
<evidence type="ECO:0000250" key="1"/>
<evidence type="ECO:0000255" key="2">
    <source>
        <dbReference type="HAMAP-Rule" id="MF_01129"/>
    </source>
</evidence>
<evidence type="ECO:0000269" key="3">
    <source>
    </source>
</evidence>
<accession>Q3AFC6</accession>
<dbReference type="EC" id="7.1.3.1" evidence="3"/>
<dbReference type="EMBL" id="CP000141">
    <property type="protein sequence ID" value="ABB14908.1"/>
    <property type="molecule type" value="Genomic_DNA"/>
</dbReference>
<dbReference type="RefSeq" id="WP_011343234.1">
    <property type="nucleotide sequence ID" value="NC_007503.1"/>
</dbReference>
<dbReference type="SMR" id="Q3AFC6"/>
<dbReference type="STRING" id="246194.CHY_0286"/>
<dbReference type="KEGG" id="chy:CHY_0286"/>
<dbReference type="eggNOG" id="COG3808">
    <property type="taxonomic scope" value="Bacteria"/>
</dbReference>
<dbReference type="HOGENOM" id="CLU_008743_3_1_9"/>
<dbReference type="InParanoid" id="Q3AFC6"/>
<dbReference type="OrthoDB" id="9808652at2"/>
<dbReference type="Proteomes" id="UP000002706">
    <property type="component" value="Chromosome"/>
</dbReference>
<dbReference type="GO" id="GO:0005886">
    <property type="term" value="C:plasma membrane"/>
    <property type="evidence" value="ECO:0007669"/>
    <property type="project" value="UniProtKB-SubCell"/>
</dbReference>
<dbReference type="GO" id="GO:0009678">
    <property type="term" value="F:diphosphate hydrolysis-driven proton transmembrane transporter activity"/>
    <property type="evidence" value="ECO:0007669"/>
    <property type="project" value="UniProtKB-UniRule"/>
</dbReference>
<dbReference type="GO" id="GO:0004427">
    <property type="term" value="F:inorganic diphosphate phosphatase activity"/>
    <property type="evidence" value="ECO:0007669"/>
    <property type="project" value="UniProtKB-UniRule"/>
</dbReference>
<dbReference type="GO" id="GO:0000287">
    <property type="term" value="F:magnesium ion binding"/>
    <property type="evidence" value="ECO:0007669"/>
    <property type="project" value="UniProtKB-UniRule"/>
</dbReference>
<dbReference type="GO" id="GO:0030955">
    <property type="term" value="F:potassium ion binding"/>
    <property type="evidence" value="ECO:0007669"/>
    <property type="project" value="UniProtKB-UniRule"/>
</dbReference>
<dbReference type="GO" id="GO:0006814">
    <property type="term" value="P:sodium ion transport"/>
    <property type="evidence" value="ECO:0007669"/>
    <property type="project" value="UniProtKB-UniRule"/>
</dbReference>
<dbReference type="HAMAP" id="MF_01129">
    <property type="entry name" value="PPase_energized_pump"/>
    <property type="match status" value="1"/>
</dbReference>
<dbReference type="InterPro" id="IPR004131">
    <property type="entry name" value="PPase-energised_H-pump"/>
</dbReference>
<dbReference type="NCBIfam" id="NF001953">
    <property type="entry name" value="PRK00733.2-1"/>
    <property type="match status" value="1"/>
</dbReference>
<dbReference type="NCBIfam" id="NF001959">
    <property type="entry name" value="PRK00733.3-4"/>
    <property type="match status" value="1"/>
</dbReference>
<dbReference type="NCBIfam" id="NF001960">
    <property type="entry name" value="PRK00733.3-5"/>
    <property type="match status" value="1"/>
</dbReference>
<dbReference type="NCBIfam" id="TIGR01104">
    <property type="entry name" value="V_PPase"/>
    <property type="match status" value="1"/>
</dbReference>
<dbReference type="PANTHER" id="PTHR31998">
    <property type="entry name" value="K(+)-INSENSITIVE PYROPHOSPHATE-ENERGIZED PROTON PUMP"/>
    <property type="match status" value="1"/>
</dbReference>
<dbReference type="Pfam" id="PF03030">
    <property type="entry name" value="H_PPase"/>
    <property type="match status" value="1"/>
</dbReference>
<dbReference type="PIRSF" id="PIRSF001265">
    <property type="entry name" value="H+-PPase"/>
    <property type="match status" value="1"/>
</dbReference>
<organism>
    <name type="scientific">Carboxydothermus hydrogenoformans (strain ATCC BAA-161 / DSM 6008 / Z-2901)</name>
    <dbReference type="NCBI Taxonomy" id="246194"/>
    <lineage>
        <taxon>Bacteria</taxon>
        <taxon>Bacillati</taxon>
        <taxon>Bacillota</taxon>
        <taxon>Clostridia</taxon>
        <taxon>Thermoanaerobacterales</taxon>
        <taxon>Thermoanaerobacteraceae</taxon>
        <taxon>Carboxydothermus</taxon>
    </lineage>
</organism>
<gene>
    <name evidence="2" type="primary">hppA</name>
    <name type="ordered locus">CHY_0286</name>
</gene>
<protein>
    <recommendedName>
        <fullName>K(+)-stimulated pyrophosphate-energized proton pump</fullName>
        <ecNumber evidence="3">7.1.3.1</ecNumber>
    </recommendedName>
    <alternativeName>
        <fullName>Membrane-bound proton-translocating pyrophosphatase</fullName>
    </alternativeName>
    <alternativeName>
        <fullName evidence="2">Pyrophosphate-energized inorganic pyrophosphatase</fullName>
        <shortName>H(+)-PPase</shortName>
    </alternativeName>
</protein>
<sequence length="686" mass="71063">MENGMTLAYYGLGAGILAILFALYLFSSVLKEDMGNEKMREISQAIFEGAMAYLNRQYKTLIPFALVVFVLLVVGFGYKEGDFGYGLKVGVSFLVGAIASALAGYAGMTSTTKANARTTQAARKSLNAALNVAFRAGGVMGMSVAGLGLLGVSALYIIFKDVHVIDSFAFGASAIAFFARVGGGIYTKAADVGADLVGKVEAGIPEDDPRNPAVIADNVGDNVGDTAGMGADLFESYGATTMAAMLLGLTFAKNHGFSEVLGATFPLLLGAAGIVAAIISTFFVRTSEDGNPQMALNIGLWSTNFITAIFTYIIAQYVFGSEWAPKIFIAVVSGLVVNVAIGSLTEYYTSNLKPPAQKIAEASTTGPATNIISGIAVGMRSTYLPIIVIVAAIMVGYWAAGFYGIALAAMGMLATAAMVVAVDSFGPVADNAGGIAEMAELGPEIRNKTDKLDAVGNTTAAVAKGFAIGSAALTALALFSAYTDLAKTNPNLQKYLVNGKFDLNITDPWVLVGLFLGGTVAFLVAALTMESVGKAAFDMIEEVRRQFREIPGLMEGKARPDYARCVSISTAAAIRQMIAPGLLAVGAPLAIGFILGFKALTGYLAGVTATGVLLAIYMANAGGAWDNAKKYIEAGNLGGKGSDTHKAAVVGDTVGDPFKDTSGPAMNPLMKVAGTFALIIVPLLLF</sequence>
<name>HPPA_CARHZ</name>
<keyword id="KW-0106">Calcium</keyword>
<keyword id="KW-1003">Cell membrane</keyword>
<keyword id="KW-0375">Hydrogen ion transport</keyword>
<keyword id="KW-0406">Ion transport</keyword>
<keyword id="KW-0460">Magnesium</keyword>
<keyword id="KW-0472">Membrane</keyword>
<keyword id="KW-0479">Metal-binding</keyword>
<keyword id="KW-0630">Potassium</keyword>
<keyword id="KW-1185">Reference proteome</keyword>
<keyword id="KW-1278">Translocase</keyword>
<keyword id="KW-0812">Transmembrane</keyword>
<keyword id="KW-1133">Transmembrane helix</keyword>
<keyword id="KW-0813">Transport</keyword>
<proteinExistence type="evidence at protein level"/>
<comment type="function">
    <text evidence="2">Proton pump that utilizes the energy of pyrophosphate hydrolysis as the driving force for Na(+) movement across the membrane.</text>
</comment>
<comment type="catalytic activity">
    <reaction evidence="3">
        <text>diphosphate + H2O + H(+)(in) = 2 phosphate + 2 H(+)(out)</text>
        <dbReference type="Rhea" id="RHEA:13973"/>
        <dbReference type="ChEBI" id="CHEBI:15377"/>
        <dbReference type="ChEBI" id="CHEBI:15378"/>
        <dbReference type="ChEBI" id="CHEBI:33019"/>
        <dbReference type="ChEBI" id="CHEBI:43474"/>
        <dbReference type="EC" id="7.1.3.1"/>
    </reaction>
</comment>
<comment type="cofactor">
    <cofactor evidence="2">
        <name>Mg(2+)</name>
        <dbReference type="ChEBI" id="CHEBI:18420"/>
    </cofactor>
</comment>
<comment type="activity regulation">
    <text evidence="2 3">Requires K(+) for maximal activity.</text>
</comment>
<comment type="subunit">
    <text evidence="2">Homodimer.</text>
</comment>
<comment type="subcellular location">
    <subcellularLocation>
        <location evidence="2">Cell membrane</location>
        <topology evidence="2">Multi-pass membrane protein</topology>
    </subcellularLocation>
</comment>
<comment type="similarity">
    <text evidence="2">Belongs to the H(+)-translocating pyrophosphatase (TC 3.A.10) family. K(+)-stimulated subfamily.</text>
</comment>
<feature type="chain" id="PRO_0000401066" description="K(+)-stimulated pyrophosphate-energized proton pump">
    <location>
        <begin position="1"/>
        <end position="686"/>
    </location>
</feature>
<feature type="transmembrane region" description="Helical" evidence="2">
    <location>
        <begin position="6"/>
        <end position="26"/>
    </location>
</feature>
<feature type="transmembrane region" description="Helical" evidence="2">
    <location>
        <begin position="58"/>
        <end position="78"/>
    </location>
</feature>
<feature type="transmembrane region" description="Helical" evidence="2">
    <location>
        <begin position="89"/>
        <end position="109"/>
    </location>
</feature>
<feature type="transmembrane region" description="Helical" evidence="2">
    <location>
        <begin position="139"/>
        <end position="159"/>
    </location>
</feature>
<feature type="transmembrane region" description="Helical" evidence="2">
    <location>
        <begin position="165"/>
        <end position="185"/>
    </location>
</feature>
<feature type="transmembrane region" description="Helical" evidence="2">
    <location>
        <begin position="231"/>
        <end position="251"/>
    </location>
</feature>
<feature type="transmembrane region" description="Helical" evidence="2">
    <location>
        <begin position="264"/>
        <end position="284"/>
    </location>
</feature>
<feature type="transmembrane region" description="Helical" evidence="2">
    <location>
        <begin position="294"/>
        <end position="314"/>
    </location>
</feature>
<feature type="transmembrane region" description="Helical" evidence="2">
    <location>
        <begin position="327"/>
        <end position="347"/>
    </location>
</feature>
<feature type="transmembrane region" description="Helical" evidence="2">
    <location>
        <begin position="386"/>
        <end position="406"/>
    </location>
</feature>
<feature type="transmembrane region" description="Helical" evidence="2">
    <location>
        <begin position="408"/>
        <end position="428"/>
    </location>
</feature>
<feature type="transmembrane region" description="Helical" evidence="2">
    <location>
        <begin position="459"/>
        <end position="479"/>
    </location>
</feature>
<feature type="transmembrane region" description="Helical" evidence="2">
    <location>
        <begin position="509"/>
        <end position="529"/>
    </location>
</feature>
<feature type="transmembrane region" description="Helical" evidence="2">
    <location>
        <begin position="577"/>
        <end position="597"/>
    </location>
</feature>
<feature type="transmembrane region" description="Helical" evidence="2">
    <location>
        <begin position="599"/>
        <end position="619"/>
    </location>
</feature>
<feature type="transmembrane region" description="Helical" evidence="2">
    <location>
        <begin position="666"/>
        <end position="686"/>
    </location>
</feature>
<feature type="binding site" evidence="1">
    <location>
        <position position="188"/>
    </location>
    <ligand>
        <name>substrate</name>
    </ligand>
</feature>
<feature type="binding site" evidence="1">
    <location>
        <position position="191"/>
    </location>
    <ligand>
        <name>Mg(2+)</name>
        <dbReference type="ChEBI" id="CHEBI:18420"/>
        <label>1</label>
    </ligand>
</feature>
<feature type="binding site" evidence="1">
    <location>
        <position position="195"/>
    </location>
    <ligand>
        <name>Mg(2+)</name>
        <dbReference type="ChEBI" id="CHEBI:18420"/>
        <label>1</label>
    </ligand>
</feature>
<feature type="binding site" evidence="1">
    <location>
        <position position="218"/>
    </location>
    <ligand>
        <name>Mg(2+)</name>
        <dbReference type="ChEBI" id="CHEBI:18420"/>
        <label>2</label>
    </ligand>
</feature>
<feature type="binding site" evidence="1">
    <location>
        <position position="221"/>
    </location>
    <ligand>
        <name>Mg(2+)</name>
        <dbReference type="ChEBI" id="CHEBI:18420"/>
        <label>2</label>
    </ligand>
</feature>
<feature type="binding site" evidence="1">
    <location>
        <position position="430"/>
    </location>
    <ligand>
        <name>Mg(2+)</name>
        <dbReference type="ChEBI" id="CHEBI:18420"/>
        <label>2</label>
    </ligand>
</feature>
<feature type="binding site" evidence="1">
    <location>
        <position position="626"/>
    </location>
    <ligand>
        <name>Ca(2+)</name>
        <dbReference type="ChEBI" id="CHEBI:29108"/>
    </ligand>
</feature>
<feature type="binding site" evidence="1">
    <location>
        <position position="652"/>
    </location>
    <ligand>
        <name>Ca(2+)</name>
        <dbReference type="ChEBI" id="CHEBI:29108"/>
    </ligand>
</feature>
<feature type="binding site" evidence="1">
    <location>
        <position position="656"/>
    </location>
    <ligand>
        <name>Ca(2+)</name>
        <dbReference type="ChEBI" id="CHEBI:29108"/>
    </ligand>
</feature>
<feature type="binding site" evidence="1">
    <location>
        <position position="659"/>
    </location>
    <ligand>
        <name>substrate</name>
    </ligand>
</feature>
<feature type="site" description="Important for ion transport" evidence="1">
    <location>
        <position position="180"/>
    </location>
</feature>
<feature type="site" description="Important for ion transport" evidence="1">
    <location>
        <position position="225"/>
    </location>
</feature>
<feature type="site" description="Important for ion transport" evidence="1">
    <location>
        <position position="232"/>
    </location>
</feature>
<feature type="site" description="Important for potassium dependence">
    <location>
        <position position="460"/>
    </location>
</feature>
<feature type="site" description="Important for ion transport" evidence="1">
    <location>
        <position position="660"/>
    </location>
</feature>
<feature type="site" description="Important for ion transport" evidence="1">
    <location>
        <position position="671"/>
    </location>
</feature>
<feature type="mutagenesis site" description="Confers K(+) independence to both pyrophosphate hydrolysis and pyrophosphate-energized H(+) translocation." evidence="3">
    <original>A</original>
    <variation>K</variation>
    <location>
        <position position="460"/>
    </location>
</feature>
<feature type="mutagenesis site" description="Does not affect the K(+) dependence of H(+)-PPase. Decreased affinity for K(+)." evidence="3">
    <original>A</original>
    <variation>T</variation>
    <location>
        <position position="463"/>
    </location>
</feature>